<reference key="1">
    <citation type="journal article" date="2011" name="J. Biol. Chem.">
        <title>Innate immune responses of a scleractinian coral to vibriosis.</title>
        <authorList>
            <person name="Vidal-Dupiol J."/>
            <person name="Ladriere O."/>
            <person name="Destoumieux-Garzon D."/>
            <person name="Sautiere P.E."/>
            <person name="Meistertzheim A.L."/>
            <person name="Tambutte E."/>
            <person name="Tambutte S."/>
            <person name="Duval D."/>
            <person name="Foure L."/>
            <person name="Adjeroud M."/>
            <person name="Mitta G."/>
        </authorList>
    </citation>
    <scope>NUCLEOTIDE SEQUENCE [MRNA]</scope>
    <scope>FUNCTION</scope>
    <scope>SYNTHESIS OF 68-106</scope>
    <scope>AMIDATION AT ARG-106</scope>
    <scope>DISULFIDE BONDS</scope>
    <scope>MASS SPECTROMETRY</scope>
</reference>
<reference evidence="7 8" key="2">
    <citation type="journal article" date="2018" name="Sci. Rep.">
        <title>Comparative analysis of the Pocillopora damicornis genome highlights role of immune system in coral evolution.</title>
        <authorList>
            <person name="Cunning R."/>
            <person name="Bay R.A."/>
            <person name="Gillette P."/>
            <person name="Baker A.C."/>
            <person name="Traylor-Knowles N."/>
        </authorList>
    </citation>
    <scope>NUCLEOTIDE SEQUENCE [LARGE SCALE GENOMIC DNA]</scope>
    <source>
        <strain evidence="7">RSMAS</strain>
    </source>
</reference>
<dbReference type="EMBL" id="HQ825099">
    <property type="protein sequence ID" value="ADV51532.1"/>
    <property type="molecule type" value="mRNA"/>
</dbReference>
<dbReference type="EMBL" id="RCHS01002422">
    <property type="protein sequence ID" value="RMX47400.1"/>
    <property type="status" value="ALT_INIT"/>
    <property type="molecule type" value="Genomic_DNA"/>
</dbReference>
<dbReference type="OrthoDB" id="5986676at2759"/>
<dbReference type="Proteomes" id="UP000275408">
    <property type="component" value="Unassembled WGS sequence"/>
</dbReference>
<dbReference type="GO" id="GO:0010494">
    <property type="term" value="C:cytoplasmic stress granule"/>
    <property type="evidence" value="ECO:0007669"/>
    <property type="project" value="UniProtKB-SubCell"/>
</dbReference>
<dbReference type="GO" id="GO:0005576">
    <property type="term" value="C:extracellular region"/>
    <property type="evidence" value="ECO:0007669"/>
    <property type="project" value="UniProtKB-SubCell"/>
</dbReference>
<dbReference type="GO" id="GO:0042742">
    <property type="term" value="P:defense response to bacterium"/>
    <property type="evidence" value="ECO:0007669"/>
    <property type="project" value="UniProtKB-KW"/>
</dbReference>
<dbReference type="GO" id="GO:0050832">
    <property type="term" value="P:defense response to fungus"/>
    <property type="evidence" value="ECO:0007669"/>
    <property type="project" value="UniProtKB-KW"/>
</dbReference>
<dbReference type="GO" id="GO:0045087">
    <property type="term" value="P:innate immune response"/>
    <property type="evidence" value="ECO:0007669"/>
    <property type="project" value="UniProtKB-KW"/>
</dbReference>
<dbReference type="GO" id="GO:0031640">
    <property type="term" value="P:killing of cells of another organism"/>
    <property type="evidence" value="ECO:0007669"/>
    <property type="project" value="UniProtKB-KW"/>
</dbReference>
<proteinExistence type="evidence at protein level"/>
<evidence type="ECO:0000255" key="1"/>
<evidence type="ECO:0000256" key="2">
    <source>
        <dbReference type="SAM" id="MobiDB-lite"/>
    </source>
</evidence>
<evidence type="ECO:0000269" key="3">
    <source>
    </source>
</evidence>
<evidence type="ECO:0000303" key="4">
    <source>
    </source>
</evidence>
<evidence type="ECO:0000305" key="5"/>
<evidence type="ECO:0000305" key="6">
    <source>
    </source>
</evidence>
<evidence type="ECO:0000312" key="7">
    <source>
        <dbReference type="EMBL" id="RMX47400.1"/>
    </source>
</evidence>
<evidence type="ECO:0000312" key="8">
    <source>
        <dbReference type="Proteomes" id="UP000275408"/>
    </source>
</evidence>
<protein>
    <recommendedName>
        <fullName evidence="4">Antimicrobial peptide damicornin</fullName>
    </recommendedName>
</protein>
<keyword id="KW-0027">Amidation</keyword>
<keyword id="KW-0044">Antibiotic</keyword>
<keyword id="KW-0929">Antimicrobial</keyword>
<keyword id="KW-0165">Cleavage on pair of basic residues</keyword>
<keyword id="KW-0963">Cytoplasm</keyword>
<keyword id="KW-1015">Disulfide bond</keyword>
<keyword id="KW-0295">Fungicide</keyword>
<keyword id="KW-0391">Immunity</keyword>
<keyword id="KW-0399">Innate immunity</keyword>
<keyword id="KW-1185">Reference proteome</keyword>
<keyword id="KW-0964">Secreted</keyword>
<keyword id="KW-0732">Signal</keyword>
<organism>
    <name type="scientific">Pocillopora damicornis</name>
    <name type="common">Cauliflower coral</name>
    <name type="synonym">Millepora damicornis</name>
    <dbReference type="NCBI Taxonomy" id="46731"/>
    <lineage>
        <taxon>Eukaryota</taxon>
        <taxon>Metazoa</taxon>
        <taxon>Cnidaria</taxon>
        <taxon>Anthozoa</taxon>
        <taxon>Hexacorallia</taxon>
        <taxon>Scleractinia</taxon>
        <taxon>Astrocoeniina</taxon>
        <taxon>Pocilloporidae</taxon>
        <taxon>Pocillopora</taxon>
    </lineage>
</organism>
<accession>F1DFM9</accession>
<accession>A0A3M6U162</accession>
<feature type="signal peptide" evidence="1">
    <location>
        <begin position="1"/>
        <end position="22"/>
    </location>
</feature>
<feature type="propeptide" id="PRO_0000452121" evidence="6">
    <location>
        <begin position="23"/>
        <end position="67"/>
    </location>
</feature>
<feature type="chain" id="PRO_5003264075" description="Antimicrobial peptide damicornin" evidence="3">
    <location>
        <begin position="68"/>
        <end position="106"/>
    </location>
</feature>
<feature type="region of interest" description="Disordered" evidence="2">
    <location>
        <begin position="37"/>
        <end position="62"/>
    </location>
</feature>
<feature type="compositionally biased region" description="Acidic residues" evidence="2">
    <location>
        <begin position="37"/>
        <end position="46"/>
    </location>
</feature>
<feature type="compositionally biased region" description="Low complexity" evidence="2">
    <location>
        <begin position="47"/>
        <end position="61"/>
    </location>
</feature>
<feature type="modified residue" description="Arginine amide" evidence="3">
    <location>
        <position position="106"/>
    </location>
</feature>
<feature type="disulfide bond" evidence="3">
    <location>
        <begin position="69"/>
        <end position="105"/>
    </location>
</feature>
<feature type="disulfide bond" evidence="3">
    <location>
        <begin position="78"/>
        <end position="99"/>
    </location>
</feature>
<feature type="disulfide bond" evidence="3">
    <location>
        <begin position="85"/>
        <end position="103"/>
    </location>
</feature>
<feature type="sequence conflict" description="In Ref. 2; RMX47400." evidence="5" ref="2">
    <original>M</original>
    <variation>I</variation>
    <location>
        <position position="15"/>
    </location>
</feature>
<comment type="function">
    <text evidence="3">Cationic peptide with probable antimicrobial activity against coral pathogens. Shows in vitro activity against Gram-positive bacteria and the filamentous fungus F.oxysporum (MIC=1.25 uM). Gram-positive bacteria tested are B.megaterium (MIC=20 uM), S.aureus (MIC=5 uM), M. luteus (MIC=1.25 uM), B.stationis (MIC=10 uM), M.maritypicum (MIC=20 uM). Has no or little effect against Gram-negative bacteria (the coral pathogen V.coralliilyticus (MIC&gt;20 uM), V.aesturianus (MIC&gt;20 uM), V.shiloi (MIC&gt;20 uM), and E.coli (MIC=10 uM)). Has no hemolytic activity against sheep erythrocytes.</text>
</comment>
<comment type="subcellular location">
    <subcellularLocation>
        <location evidence="6">Cytoplasm</location>
        <location evidence="6">Stress granule</location>
    </subcellularLocation>
    <subcellularLocation>
        <location evidence="6">Secreted</location>
    </subcellularLocation>
</comment>
<comment type="tissue specificity">
    <text evidence="3">Is specifically expressed in the granular cells of the ectoderm.</text>
</comment>
<comment type="induction">
    <text evidence="3">Transiently up-regulated (6-fold) after challenge with the coral pathogen V.coralliilyticus and dramatically repressed (50-fold) thereafter.</text>
</comment>
<comment type="mass spectrometry" mass="4492.74" method="MALDI" evidence="3">
    <text>Average mass.</text>
</comment>
<comment type="similarity">
    <text evidence="5">Belongs to the coral AMP family.</text>
</comment>
<comment type="sequence caution" evidence="5">
    <conflict type="erroneous initiation">
        <sequence resource="EMBL-CDS" id="RMX47400"/>
    </conflict>
    <text>Truncated N-terminus.</text>
</comment>
<sequence length="107" mass="11775">MKVLVILFGAMLVLMEFQKASAATLLEDFDDDDDLLDDGGDFDLEANSDASSGNGNDSNDAVPEKRRACADLRGKTFCRLFKSYCDKKGIRGRLMRDKCSYSCGCRG</sequence>
<name>AMP_POCDA</name>